<gene>
    <name type="primary">Gpm6b</name>
    <name type="synonym">M6b</name>
</gene>
<evidence type="ECO:0000255" key="1"/>
<evidence type="ECO:0000256" key="2">
    <source>
        <dbReference type="SAM" id="MobiDB-lite"/>
    </source>
</evidence>
<evidence type="ECO:0000269" key="3">
    <source>
    </source>
</evidence>
<evidence type="ECO:0000269" key="4">
    <source>
    </source>
</evidence>
<evidence type="ECO:0000303" key="5">
    <source>
    </source>
</evidence>
<evidence type="ECO:0000303" key="6">
    <source>
    </source>
</evidence>
<evidence type="ECO:0000303" key="7">
    <source>
    </source>
</evidence>
<evidence type="ECO:0000303" key="8">
    <source>
    </source>
</evidence>
<evidence type="ECO:0000305" key="9"/>
<evidence type="ECO:0007744" key="10">
    <source>
    </source>
</evidence>
<sequence>MKPAMETAAEENTEQSQERKVNSRAEMEIGRYHWMYPGSKNHQYRPVPNLGDRAGPLSSPGCFECCIKCLGGVPYASLVATILCFSGVALFCGCGHVALAGTVAILEQHFSTNTSDHALLSEVIQLMQYVIYGIASFFFLYGIILLAEGFYTTSAVKELHGEFKTTACGRCISGMFVFLTYVLGVAWLGVFGFSAVPVFMFYNIWSTCEVIKSPQSNGTSGVEQICVDVRQYGIIPWNAFPGKICGSALENICNTNEFYMSYHLFIVACAGAGATVIALIHFLMILSSNWAYLKDASKMQAYQDIKAKEEQELQDIQSRSKEQLNSYT</sequence>
<name>GPM6B_MOUSE</name>
<feature type="chain" id="PRO_0000159022" description="Neuronal membrane glycoprotein M6-b">
    <location>
        <begin position="1"/>
        <end position="328"/>
    </location>
</feature>
<feature type="transmembrane region" description="Helical" evidence="1">
    <location>
        <begin position="71"/>
        <end position="91"/>
    </location>
</feature>
<feature type="transmembrane region" description="Helical" evidence="1">
    <location>
        <begin position="130"/>
        <end position="150"/>
    </location>
</feature>
<feature type="transmembrane region" description="Helical" evidence="1">
    <location>
        <begin position="176"/>
        <end position="196"/>
    </location>
</feature>
<feature type="transmembrane region" description="Helical" evidence="1">
    <location>
        <begin position="265"/>
        <end position="285"/>
    </location>
</feature>
<feature type="region of interest" description="Disordered" evidence="2">
    <location>
        <begin position="1"/>
        <end position="22"/>
    </location>
</feature>
<feature type="modified residue" description="Phosphoserine" evidence="10">
    <location>
        <position position="318"/>
    </location>
</feature>
<feature type="modified residue" description="Phosphoserine" evidence="10">
    <location>
        <position position="320"/>
    </location>
</feature>
<feature type="modified residue" description="Phosphoserine" evidence="10">
    <location>
        <position position="326"/>
    </location>
</feature>
<feature type="glycosylation site" description="N-linked (GlcNAc...) asparagine" evidence="1">
    <location>
        <position position="113"/>
    </location>
</feature>
<feature type="glycosylation site" description="N-linked (GlcNAc...) asparagine" evidence="1">
    <location>
        <position position="217"/>
    </location>
</feature>
<feature type="splice variant" id="VSP_007318" description="In isoform 3 and isoform 5." evidence="5 6 7">
    <location>
        <begin position="2"/>
        <end position="60"/>
    </location>
</feature>
<feature type="splice variant" id="VSP_007320" description="In isoform 4 and isoform 8." evidence="5 8">
    <location>
        <begin position="21"/>
        <end position="60"/>
    </location>
</feature>
<feature type="splice variant" id="VSP_007319" description="In isoform 7." evidence="5">
    <original>VNSRAEMEIGRYHWMYPGSKNHQYRPVPN</original>
    <variation>GSKNAKHLAKAGIANRFRMPHLSLGRWDC</variation>
    <location>
        <begin position="21"/>
        <end position="49"/>
    </location>
</feature>
<feature type="splice variant" id="VSP_007321" description="In isoform 7." evidence="5">
    <location>
        <begin position="50"/>
        <end position="328"/>
    </location>
</feature>
<feature type="splice variant" id="VSP_007322" description="In isoform 6." evidence="5">
    <original>CFECCIKCLGGVPYASLVATILCFSGVA</original>
    <variation>SKNAKHLAKAGIANRFRMPHLSLGRWDC</variation>
    <location>
        <begin position="62"/>
        <end position="89"/>
    </location>
</feature>
<feature type="splice variant" id="VSP_007323" description="In isoform 6." evidence="5">
    <location>
        <begin position="90"/>
        <end position="328"/>
    </location>
</feature>
<feature type="splice variant" id="VSP_007324" description="In isoform 2, isoform 4 and isoform 5." evidence="5 6">
    <original>IHFLMILSSNWAYLKDASKMQAYQDI</original>
    <variation>LIYMMATTYNYAVLKFKSREDCCTKF</variation>
    <location>
        <begin position="280"/>
        <end position="305"/>
    </location>
</feature>
<feature type="splice variant" id="VSP_007325" description="In isoform 2, isoform 4 and isoform 5." evidence="5 6">
    <location>
        <begin position="306"/>
        <end position="328"/>
    </location>
</feature>
<feature type="sequence conflict" description="In Ref. 2." evidence="9" ref="2">
    <original>S</original>
    <variation>P</variation>
    <location>
        <position position="288"/>
    </location>
</feature>
<organism>
    <name type="scientific">Mus musculus</name>
    <name type="common">Mouse</name>
    <dbReference type="NCBI Taxonomy" id="10090"/>
    <lineage>
        <taxon>Eukaryota</taxon>
        <taxon>Metazoa</taxon>
        <taxon>Chordata</taxon>
        <taxon>Craniata</taxon>
        <taxon>Vertebrata</taxon>
        <taxon>Euteleostomi</taxon>
        <taxon>Mammalia</taxon>
        <taxon>Eutheria</taxon>
        <taxon>Euarchontoglires</taxon>
        <taxon>Glires</taxon>
        <taxon>Rodentia</taxon>
        <taxon>Myomorpha</taxon>
        <taxon>Muroidea</taxon>
        <taxon>Muridae</taxon>
        <taxon>Murinae</taxon>
        <taxon>Mus</taxon>
        <taxon>Mus</taxon>
    </lineage>
</organism>
<keyword id="KW-0025">Alternative splicing</keyword>
<keyword id="KW-1003">Cell membrane</keyword>
<keyword id="KW-0903">Direct protein sequencing</keyword>
<keyword id="KW-0325">Glycoprotein</keyword>
<keyword id="KW-0472">Membrane</keyword>
<keyword id="KW-0892">Osteogenesis</keyword>
<keyword id="KW-0597">Phosphoprotein</keyword>
<keyword id="KW-0653">Protein transport</keyword>
<keyword id="KW-1185">Reference proteome</keyword>
<keyword id="KW-0812">Transmembrane</keyword>
<keyword id="KW-1133">Transmembrane helix</keyword>
<keyword id="KW-0813">Transport</keyword>
<protein>
    <recommendedName>
        <fullName>Neuronal membrane glycoprotein M6-b</fullName>
        <shortName>M6b</shortName>
    </recommendedName>
</protein>
<dbReference type="EMBL" id="S65737">
    <property type="protein sequence ID" value="AAB28351.1"/>
    <property type="molecule type" value="mRNA"/>
</dbReference>
<dbReference type="EMBL" id="AF254869">
    <property type="protein sequence ID" value="AAF87987.1"/>
    <property type="molecule type" value="mRNA"/>
</dbReference>
<dbReference type="EMBL" id="AF254870">
    <property type="protein sequence ID" value="AAF87988.1"/>
    <property type="molecule type" value="mRNA"/>
</dbReference>
<dbReference type="EMBL" id="AF254871">
    <property type="protein sequence ID" value="AAF87989.1"/>
    <property type="molecule type" value="mRNA"/>
</dbReference>
<dbReference type="EMBL" id="AF254872">
    <property type="protein sequence ID" value="AAF87990.1"/>
    <property type="molecule type" value="mRNA"/>
</dbReference>
<dbReference type="EMBL" id="AF254873">
    <property type="protein sequence ID" value="AAF87991.1"/>
    <property type="molecule type" value="mRNA"/>
</dbReference>
<dbReference type="EMBL" id="AF254874">
    <property type="protein sequence ID" value="AAF87992.1"/>
    <property type="molecule type" value="mRNA"/>
</dbReference>
<dbReference type="EMBL" id="AF254875">
    <property type="protein sequence ID" value="AAF87993.1"/>
    <property type="molecule type" value="mRNA"/>
</dbReference>
<dbReference type="EMBL" id="AF254876">
    <property type="protein sequence ID" value="AAF87994.1"/>
    <property type="molecule type" value="mRNA"/>
</dbReference>
<dbReference type="EMBL" id="AF254877">
    <property type="protein sequence ID" value="AAF87995.1"/>
    <property type="molecule type" value="mRNA"/>
</dbReference>
<dbReference type="EMBL" id="AF254878">
    <property type="protein sequence ID" value="AAF87996.1"/>
    <property type="molecule type" value="mRNA"/>
</dbReference>
<dbReference type="EMBL" id="AF254879">
    <property type="protein sequence ID" value="AAF87997.1"/>
    <property type="molecule type" value="mRNA"/>
</dbReference>
<dbReference type="EMBL" id="AK016567">
    <property type="protein sequence ID" value="BAB30309.1"/>
    <property type="molecule type" value="mRNA"/>
</dbReference>
<dbReference type="EMBL" id="AL671905">
    <property type="status" value="NOT_ANNOTATED_CDS"/>
    <property type="molecule type" value="Genomic_DNA"/>
</dbReference>
<dbReference type="EMBL" id="BC003912">
    <property type="protein sequence ID" value="AAH03912.1"/>
    <property type="molecule type" value="mRNA"/>
</dbReference>
<dbReference type="EMBL" id="BC025165">
    <property type="protein sequence ID" value="AAH25165.1"/>
    <property type="molecule type" value="mRNA"/>
</dbReference>
<dbReference type="CCDS" id="CCDS30526.1">
    <molecule id="P35803-3"/>
</dbReference>
<dbReference type="CCDS" id="CCDS53243.1">
    <molecule id="P35803-5"/>
</dbReference>
<dbReference type="CCDS" id="CCDS53244.1">
    <molecule id="P35803-2"/>
</dbReference>
<dbReference type="CCDS" id="CCDS53245.1">
    <molecule id="P35803-1"/>
</dbReference>
<dbReference type="CCDS" id="CCDS53246.1">
    <molecule id="P35803-4"/>
</dbReference>
<dbReference type="CCDS" id="CCDS53247.1">
    <molecule id="P35803-8"/>
</dbReference>
<dbReference type="RefSeq" id="NP_001171426.1">
    <property type="nucleotide sequence ID" value="NM_001177955.1"/>
</dbReference>
<dbReference type="RefSeq" id="NP_001171427.1">
    <property type="nucleotide sequence ID" value="NM_001177956.1"/>
</dbReference>
<dbReference type="RefSeq" id="NP_001171428.1">
    <property type="nucleotide sequence ID" value="NM_001177957.1"/>
</dbReference>
<dbReference type="RefSeq" id="NP_001171429.1">
    <molecule id="P35803-8"/>
    <property type="nucleotide sequence ID" value="NM_001177958.2"/>
</dbReference>
<dbReference type="RefSeq" id="NP_001171430.1">
    <molecule id="P35803-4"/>
    <property type="nucleotide sequence ID" value="NM_001177959.2"/>
</dbReference>
<dbReference type="RefSeq" id="NP_001171431.1">
    <molecule id="P35803-4"/>
    <property type="nucleotide sequence ID" value="NM_001177960.2"/>
</dbReference>
<dbReference type="RefSeq" id="NP_001171432.1">
    <molecule id="P35803-5"/>
    <property type="nucleotide sequence ID" value="NM_001177961.2"/>
</dbReference>
<dbReference type="RefSeq" id="NP_001171433.1">
    <molecule id="P35803-5"/>
    <property type="nucleotide sequence ID" value="NM_001177962.2"/>
</dbReference>
<dbReference type="RefSeq" id="NP_075611.1">
    <molecule id="P35803-3"/>
    <property type="nucleotide sequence ID" value="NM_023122.4"/>
</dbReference>
<dbReference type="BioGRID" id="200024">
    <property type="interactions" value="4"/>
</dbReference>
<dbReference type="FunCoup" id="P35803">
    <property type="interactions" value="512"/>
</dbReference>
<dbReference type="IntAct" id="P35803">
    <property type="interactions" value="2"/>
</dbReference>
<dbReference type="MINT" id="P35803"/>
<dbReference type="STRING" id="10090.ENSMUSP00000107848"/>
<dbReference type="TCDB" id="9.B.38.1.3">
    <property type="family name" value="the myelin proteolipid protein (mplp) family"/>
</dbReference>
<dbReference type="GlyConnect" id="2551">
    <property type="glycosylation" value="1 N-Linked glycan (1 site)"/>
</dbReference>
<dbReference type="GlyCosmos" id="P35803">
    <property type="glycosylation" value="2 sites, 1 glycan"/>
</dbReference>
<dbReference type="GlyGen" id="P35803">
    <property type="glycosylation" value="3 sites, 3 N-linked glycans (1 site), 1 O-linked glycan (1 site)"/>
</dbReference>
<dbReference type="iPTMnet" id="P35803"/>
<dbReference type="PhosphoSitePlus" id="P35803"/>
<dbReference type="SwissPalm" id="P35803"/>
<dbReference type="PaxDb" id="10090-ENSMUSP00000107848"/>
<dbReference type="PeptideAtlas" id="P35803"/>
<dbReference type="ProteomicsDB" id="271145">
    <molecule id="P35803-1"/>
</dbReference>
<dbReference type="ProteomicsDB" id="271146">
    <molecule id="P35803-2"/>
</dbReference>
<dbReference type="ProteomicsDB" id="271147">
    <molecule id="P35803-3"/>
</dbReference>
<dbReference type="ProteomicsDB" id="271148">
    <molecule id="P35803-4"/>
</dbReference>
<dbReference type="ProteomicsDB" id="271149">
    <molecule id="P35803-5"/>
</dbReference>
<dbReference type="ProteomicsDB" id="271150">
    <molecule id="P35803-6"/>
</dbReference>
<dbReference type="ProteomicsDB" id="271151">
    <molecule id="P35803-7"/>
</dbReference>
<dbReference type="ProteomicsDB" id="271152">
    <molecule id="P35803-8"/>
</dbReference>
<dbReference type="Antibodypedia" id="484">
    <property type="antibodies" value="134 antibodies from 23 providers"/>
</dbReference>
<dbReference type="DNASU" id="14758"/>
<dbReference type="Ensembl" id="ENSMUST00000060210.14">
    <molecule id="P35803-3"/>
    <property type="protein sequence ID" value="ENSMUSP00000060442.8"/>
    <property type="gene ID" value="ENSMUSG00000031342.18"/>
</dbReference>
<dbReference type="Ensembl" id="ENSMUST00000112224.8">
    <molecule id="P35803-4"/>
    <property type="protein sequence ID" value="ENSMUSP00000107843.2"/>
    <property type="gene ID" value="ENSMUSG00000031342.18"/>
</dbReference>
<dbReference type="Ensembl" id="ENSMUST00000112226.3">
    <molecule id="P35803-4"/>
    <property type="protein sequence ID" value="ENSMUSP00000107845.3"/>
    <property type="gene ID" value="ENSMUSG00000031342.18"/>
</dbReference>
<dbReference type="Ensembl" id="ENSMUST00000112228.8">
    <molecule id="P35803-8"/>
    <property type="protein sequence ID" value="ENSMUSP00000107847.2"/>
    <property type="gene ID" value="ENSMUSG00000031342.18"/>
</dbReference>
<dbReference type="Ensembl" id="ENSMUST00000112233.8">
    <molecule id="P35803-5"/>
    <property type="protein sequence ID" value="ENSMUSP00000107852.2"/>
    <property type="gene ID" value="ENSMUSG00000031342.18"/>
</dbReference>
<dbReference type="Ensembl" id="ENSMUST00000112235.8">
    <molecule id="P35803-5"/>
    <property type="protein sequence ID" value="ENSMUSP00000107854.2"/>
    <property type="gene ID" value="ENSMUSG00000031342.18"/>
</dbReference>
<dbReference type="Ensembl" id="ENSMUST00000143263.8">
    <molecule id="P35803-7"/>
    <property type="protein sequence ID" value="ENSMUSP00000135378.2"/>
    <property type="gene ID" value="ENSMUSG00000031342.18"/>
</dbReference>
<dbReference type="GeneID" id="14758"/>
<dbReference type="KEGG" id="mmu:14758"/>
<dbReference type="UCSC" id="uc009uwg.2">
    <molecule id="P35803-3"/>
    <property type="organism name" value="mouse"/>
</dbReference>
<dbReference type="UCSC" id="uc009uwm.2">
    <molecule id="P35803-4"/>
    <property type="organism name" value="mouse"/>
</dbReference>
<dbReference type="AGR" id="MGI:107672"/>
<dbReference type="CTD" id="2824"/>
<dbReference type="MGI" id="MGI:107672">
    <property type="gene designation" value="Gpm6b"/>
</dbReference>
<dbReference type="VEuPathDB" id="HostDB:ENSMUSG00000031342"/>
<dbReference type="eggNOG" id="KOG4800">
    <property type="taxonomic scope" value="Eukaryota"/>
</dbReference>
<dbReference type="GeneTree" id="ENSGT00390000006915"/>
<dbReference type="HOGENOM" id="CLU_064167_2_0_1"/>
<dbReference type="InParanoid" id="P35803"/>
<dbReference type="OMA" id="NDCMARV"/>
<dbReference type="OrthoDB" id="9993736at2759"/>
<dbReference type="PhylomeDB" id="P35803"/>
<dbReference type="BioGRID-ORCS" id="14758">
    <property type="hits" value="3 hits in 78 CRISPR screens"/>
</dbReference>
<dbReference type="CD-CODE" id="CE726F99">
    <property type="entry name" value="Postsynaptic density"/>
</dbReference>
<dbReference type="ChiTaRS" id="Gpm6b">
    <property type="organism name" value="mouse"/>
</dbReference>
<dbReference type="PRO" id="PR:P35803"/>
<dbReference type="Proteomes" id="UP000000589">
    <property type="component" value="Chromosome X"/>
</dbReference>
<dbReference type="RNAct" id="P35803">
    <property type="molecule type" value="protein"/>
</dbReference>
<dbReference type="Bgee" id="ENSMUSG00000031342">
    <property type="expression patterns" value="Expressed in cerebellum lobe and 261 other cell types or tissues"/>
</dbReference>
<dbReference type="ExpressionAtlas" id="P35803">
    <property type="expression patterns" value="baseline and differential"/>
</dbReference>
<dbReference type="GO" id="GO:0045121">
    <property type="term" value="C:membrane raft"/>
    <property type="evidence" value="ECO:0000314"/>
    <property type="project" value="UniProtKB"/>
</dbReference>
<dbReference type="GO" id="GO:0005886">
    <property type="term" value="C:plasma membrane"/>
    <property type="evidence" value="ECO:0000314"/>
    <property type="project" value="UniProtKB"/>
</dbReference>
<dbReference type="GO" id="GO:0085029">
    <property type="term" value="P:extracellular matrix assembly"/>
    <property type="evidence" value="ECO:0000250"/>
    <property type="project" value="UniProtKB"/>
</dbReference>
<dbReference type="GO" id="GO:2000009">
    <property type="term" value="P:negative regulation of protein localization to cell surface"/>
    <property type="evidence" value="ECO:0000314"/>
    <property type="project" value="UniProtKB"/>
</dbReference>
<dbReference type="GO" id="GO:0051612">
    <property type="term" value="P:negative regulation of serotonin uptake"/>
    <property type="evidence" value="ECO:0000314"/>
    <property type="project" value="UniProtKB"/>
</dbReference>
<dbReference type="GO" id="GO:0001503">
    <property type="term" value="P:ossification"/>
    <property type="evidence" value="ECO:0007669"/>
    <property type="project" value="UniProtKB-KW"/>
</dbReference>
<dbReference type="GO" id="GO:0030501">
    <property type="term" value="P:positive regulation of bone mineralization"/>
    <property type="evidence" value="ECO:0000250"/>
    <property type="project" value="UniProtKB"/>
</dbReference>
<dbReference type="GO" id="GO:0015031">
    <property type="term" value="P:protein transport"/>
    <property type="evidence" value="ECO:0007669"/>
    <property type="project" value="UniProtKB-KW"/>
</dbReference>
<dbReference type="GO" id="GO:0032956">
    <property type="term" value="P:regulation of actin cytoskeleton organization"/>
    <property type="evidence" value="ECO:0000250"/>
    <property type="project" value="UniProtKB"/>
</dbReference>
<dbReference type="GO" id="GO:0051893">
    <property type="term" value="P:regulation of focal adhesion assembly"/>
    <property type="evidence" value="ECO:0000250"/>
    <property type="project" value="UniProtKB"/>
</dbReference>
<dbReference type="InterPro" id="IPR001614">
    <property type="entry name" value="Myelin_PLP"/>
</dbReference>
<dbReference type="InterPro" id="IPR018237">
    <property type="entry name" value="Myelin_PLP_CS"/>
</dbReference>
<dbReference type="PANTHER" id="PTHR11683">
    <property type="entry name" value="MYELIN PROTEOLIPID"/>
    <property type="match status" value="1"/>
</dbReference>
<dbReference type="PANTHER" id="PTHR11683:SF10">
    <property type="entry name" value="NEURONAL MEMBRANE GLYCOPROTEIN M6-B"/>
    <property type="match status" value="1"/>
</dbReference>
<dbReference type="Pfam" id="PF01275">
    <property type="entry name" value="Myelin_PLP"/>
    <property type="match status" value="1"/>
</dbReference>
<dbReference type="PRINTS" id="PR00214">
    <property type="entry name" value="MYELINPLP"/>
</dbReference>
<dbReference type="SMART" id="SM00002">
    <property type="entry name" value="PLP"/>
    <property type="match status" value="1"/>
</dbReference>
<dbReference type="PROSITE" id="PS00575">
    <property type="entry name" value="MYELIN_PLP_1"/>
    <property type="match status" value="1"/>
</dbReference>
<dbReference type="PROSITE" id="PS01004">
    <property type="entry name" value="MYELIN_PLP_2"/>
    <property type="match status" value="1"/>
</dbReference>
<reference key="1">
    <citation type="journal article" date="1993" name="Neuron">
        <title>Molecular cloning of M6: identification of a PLP/DM20 gene family.</title>
        <authorList>
            <person name="Yan Y."/>
            <person name="Lagenaur C."/>
            <person name="Narayanan V."/>
        </authorList>
    </citation>
    <scope>NUCLEOTIDE SEQUENCE [MRNA] (ISOFORM 8)</scope>
    <source>
        <tissue>Brain</tissue>
    </source>
</reference>
<reference key="2">
    <citation type="journal article" date="2001" name="Mol. Cell. Neurosci.">
        <title>Multiple splice isoforms of proteolipid M6B in neurons and oligodendrocytes.</title>
        <authorList>
            <person name="Werner H."/>
            <person name="Dimou L."/>
            <person name="Klugmann M."/>
            <person name="Pfeiffer S."/>
            <person name="Nave K.A."/>
        </authorList>
    </citation>
    <scope>NUCLEOTIDE SEQUENCE [MRNA] (ISOFORMS 1; 2; 3; 4; 5; 6; 7 AND 8)</scope>
    <scope>SUBCELLULAR LOCATION</scope>
    <scope>TISSUE SPECIFICITY</scope>
</reference>
<reference key="3">
    <citation type="journal article" date="2005" name="Science">
        <title>The transcriptional landscape of the mammalian genome.</title>
        <authorList>
            <person name="Carninci P."/>
            <person name="Kasukawa T."/>
            <person name="Katayama S."/>
            <person name="Gough J."/>
            <person name="Frith M.C."/>
            <person name="Maeda N."/>
            <person name="Oyama R."/>
            <person name="Ravasi T."/>
            <person name="Lenhard B."/>
            <person name="Wells C."/>
            <person name="Kodzius R."/>
            <person name="Shimokawa K."/>
            <person name="Bajic V.B."/>
            <person name="Brenner S.E."/>
            <person name="Batalov S."/>
            <person name="Forrest A.R."/>
            <person name="Zavolan M."/>
            <person name="Davis M.J."/>
            <person name="Wilming L.G."/>
            <person name="Aidinis V."/>
            <person name="Allen J.E."/>
            <person name="Ambesi-Impiombato A."/>
            <person name="Apweiler R."/>
            <person name="Aturaliya R.N."/>
            <person name="Bailey T.L."/>
            <person name="Bansal M."/>
            <person name="Baxter L."/>
            <person name="Beisel K.W."/>
            <person name="Bersano T."/>
            <person name="Bono H."/>
            <person name="Chalk A.M."/>
            <person name="Chiu K.P."/>
            <person name="Choudhary V."/>
            <person name="Christoffels A."/>
            <person name="Clutterbuck D.R."/>
            <person name="Crowe M.L."/>
            <person name="Dalla E."/>
            <person name="Dalrymple B.P."/>
            <person name="de Bono B."/>
            <person name="Della Gatta G."/>
            <person name="di Bernardo D."/>
            <person name="Down T."/>
            <person name="Engstrom P."/>
            <person name="Fagiolini M."/>
            <person name="Faulkner G."/>
            <person name="Fletcher C.F."/>
            <person name="Fukushima T."/>
            <person name="Furuno M."/>
            <person name="Futaki S."/>
            <person name="Gariboldi M."/>
            <person name="Georgii-Hemming P."/>
            <person name="Gingeras T.R."/>
            <person name="Gojobori T."/>
            <person name="Green R.E."/>
            <person name="Gustincich S."/>
            <person name="Harbers M."/>
            <person name="Hayashi Y."/>
            <person name="Hensch T.K."/>
            <person name="Hirokawa N."/>
            <person name="Hill D."/>
            <person name="Huminiecki L."/>
            <person name="Iacono M."/>
            <person name="Ikeo K."/>
            <person name="Iwama A."/>
            <person name="Ishikawa T."/>
            <person name="Jakt M."/>
            <person name="Kanapin A."/>
            <person name="Katoh M."/>
            <person name="Kawasawa Y."/>
            <person name="Kelso J."/>
            <person name="Kitamura H."/>
            <person name="Kitano H."/>
            <person name="Kollias G."/>
            <person name="Krishnan S.P."/>
            <person name="Kruger A."/>
            <person name="Kummerfeld S.K."/>
            <person name="Kurochkin I.V."/>
            <person name="Lareau L.F."/>
            <person name="Lazarevic D."/>
            <person name="Lipovich L."/>
            <person name="Liu J."/>
            <person name="Liuni S."/>
            <person name="McWilliam S."/>
            <person name="Madan Babu M."/>
            <person name="Madera M."/>
            <person name="Marchionni L."/>
            <person name="Matsuda H."/>
            <person name="Matsuzawa S."/>
            <person name="Miki H."/>
            <person name="Mignone F."/>
            <person name="Miyake S."/>
            <person name="Morris K."/>
            <person name="Mottagui-Tabar S."/>
            <person name="Mulder N."/>
            <person name="Nakano N."/>
            <person name="Nakauchi H."/>
            <person name="Ng P."/>
            <person name="Nilsson R."/>
            <person name="Nishiguchi S."/>
            <person name="Nishikawa S."/>
            <person name="Nori F."/>
            <person name="Ohara O."/>
            <person name="Okazaki Y."/>
            <person name="Orlando V."/>
            <person name="Pang K.C."/>
            <person name="Pavan W.J."/>
            <person name="Pavesi G."/>
            <person name="Pesole G."/>
            <person name="Petrovsky N."/>
            <person name="Piazza S."/>
            <person name="Reed J."/>
            <person name="Reid J.F."/>
            <person name="Ring B.Z."/>
            <person name="Ringwald M."/>
            <person name="Rost B."/>
            <person name="Ruan Y."/>
            <person name="Salzberg S.L."/>
            <person name="Sandelin A."/>
            <person name="Schneider C."/>
            <person name="Schoenbach C."/>
            <person name="Sekiguchi K."/>
            <person name="Semple C.A."/>
            <person name="Seno S."/>
            <person name="Sessa L."/>
            <person name="Sheng Y."/>
            <person name="Shibata Y."/>
            <person name="Shimada H."/>
            <person name="Shimada K."/>
            <person name="Silva D."/>
            <person name="Sinclair B."/>
            <person name="Sperling S."/>
            <person name="Stupka E."/>
            <person name="Sugiura K."/>
            <person name="Sultana R."/>
            <person name="Takenaka Y."/>
            <person name="Taki K."/>
            <person name="Tammoja K."/>
            <person name="Tan S.L."/>
            <person name="Tang S."/>
            <person name="Taylor M.S."/>
            <person name="Tegner J."/>
            <person name="Teichmann S.A."/>
            <person name="Ueda H.R."/>
            <person name="van Nimwegen E."/>
            <person name="Verardo R."/>
            <person name="Wei C.L."/>
            <person name="Yagi K."/>
            <person name="Yamanishi H."/>
            <person name="Zabarovsky E."/>
            <person name="Zhu S."/>
            <person name="Zimmer A."/>
            <person name="Hide W."/>
            <person name="Bult C."/>
            <person name="Grimmond S.M."/>
            <person name="Teasdale R.D."/>
            <person name="Liu E.T."/>
            <person name="Brusic V."/>
            <person name="Quackenbush J."/>
            <person name="Wahlestedt C."/>
            <person name="Mattick J.S."/>
            <person name="Hume D.A."/>
            <person name="Kai C."/>
            <person name="Sasaki D."/>
            <person name="Tomaru Y."/>
            <person name="Fukuda S."/>
            <person name="Kanamori-Katayama M."/>
            <person name="Suzuki M."/>
            <person name="Aoki J."/>
            <person name="Arakawa T."/>
            <person name="Iida J."/>
            <person name="Imamura K."/>
            <person name="Itoh M."/>
            <person name="Kato T."/>
            <person name="Kawaji H."/>
            <person name="Kawagashira N."/>
            <person name="Kawashima T."/>
            <person name="Kojima M."/>
            <person name="Kondo S."/>
            <person name="Konno H."/>
            <person name="Nakano K."/>
            <person name="Ninomiya N."/>
            <person name="Nishio T."/>
            <person name="Okada M."/>
            <person name="Plessy C."/>
            <person name="Shibata K."/>
            <person name="Shiraki T."/>
            <person name="Suzuki S."/>
            <person name="Tagami M."/>
            <person name="Waki K."/>
            <person name="Watahiki A."/>
            <person name="Okamura-Oho Y."/>
            <person name="Suzuki H."/>
            <person name="Kawai J."/>
            <person name="Hayashizaki Y."/>
        </authorList>
    </citation>
    <scope>NUCLEOTIDE SEQUENCE [LARGE SCALE MRNA] (ISOFORM 3)</scope>
    <source>
        <strain>C57BL/6J</strain>
        <tissue>Testis</tissue>
    </source>
</reference>
<reference key="4">
    <citation type="journal article" date="2009" name="PLoS Biol.">
        <title>Lineage-specific biology revealed by a finished genome assembly of the mouse.</title>
        <authorList>
            <person name="Church D.M."/>
            <person name="Goodstadt L."/>
            <person name="Hillier L.W."/>
            <person name="Zody M.C."/>
            <person name="Goldstein S."/>
            <person name="She X."/>
            <person name="Bult C.J."/>
            <person name="Agarwala R."/>
            <person name="Cherry J.L."/>
            <person name="DiCuccio M."/>
            <person name="Hlavina W."/>
            <person name="Kapustin Y."/>
            <person name="Meric P."/>
            <person name="Maglott D."/>
            <person name="Birtle Z."/>
            <person name="Marques A.C."/>
            <person name="Graves T."/>
            <person name="Zhou S."/>
            <person name="Teague B."/>
            <person name="Potamousis K."/>
            <person name="Churas C."/>
            <person name="Place M."/>
            <person name="Herschleb J."/>
            <person name="Runnheim R."/>
            <person name="Forrest D."/>
            <person name="Amos-Landgraf J."/>
            <person name="Schwartz D.C."/>
            <person name="Cheng Z."/>
            <person name="Lindblad-Toh K."/>
            <person name="Eichler E.E."/>
            <person name="Ponting C.P."/>
        </authorList>
    </citation>
    <scope>NUCLEOTIDE SEQUENCE [LARGE SCALE GENOMIC DNA]</scope>
    <source>
        <strain>C57BL/6J</strain>
    </source>
</reference>
<reference key="5">
    <citation type="journal article" date="2004" name="Genome Res.">
        <title>The status, quality, and expansion of the NIH full-length cDNA project: the Mammalian Gene Collection (MGC).</title>
        <authorList>
            <consortium name="The MGC Project Team"/>
        </authorList>
    </citation>
    <scope>NUCLEOTIDE SEQUENCE [LARGE SCALE MRNA] (ISOFORM 5)</scope>
    <source>
        <tissue>Mammary gland</tissue>
    </source>
</reference>
<reference key="6">
    <citation type="submission" date="2007-04" db="UniProtKB">
        <authorList>
            <person name="Lubec G."/>
            <person name="Kang S.U."/>
        </authorList>
    </citation>
    <scope>PROTEIN SEQUENCE OF 158-164; 231-243; 299-306 AND 320-328</scope>
    <scope>IDENTIFICATION BY MASS SPECTROMETRY</scope>
    <source>
        <strain>C57BL/6J</strain>
        <tissue>Brain</tissue>
    </source>
</reference>
<reference key="7">
    <citation type="journal article" date="2007" name="Mol. Cell. Proteomics">
        <title>Qualitative and quantitative analyses of protein phosphorylation in naive and stimulated mouse synaptosomal preparations.</title>
        <authorList>
            <person name="Munton R.P."/>
            <person name="Tweedie-Cullen R."/>
            <person name="Livingstone-Zatchej M."/>
            <person name="Weinandy F."/>
            <person name="Waidelich M."/>
            <person name="Longo D."/>
            <person name="Gehrig P."/>
            <person name="Potthast F."/>
            <person name="Rutishauser D."/>
            <person name="Gerrits B."/>
            <person name="Panse C."/>
            <person name="Schlapbach R."/>
            <person name="Mansuy I.M."/>
        </authorList>
    </citation>
    <scope>IDENTIFICATION BY MASS SPECTROMETRY [LARGE SCALE ANALYSIS]</scope>
    <source>
        <tissue>Brain cortex</tissue>
    </source>
</reference>
<reference key="8">
    <citation type="journal article" date="2009" name="J. Mol. Neurosci.">
        <title>Membrane glycoprotein M6B interacts with the human serotonin transporter.</title>
        <authorList>
            <person name="Fjorback A.W."/>
            <person name="Muller H.K."/>
            <person name="Wiborg O."/>
        </authorList>
    </citation>
    <scope>FUNCTION</scope>
    <scope>SUBCELLULAR LOCATION</scope>
    <scope>INTERACTION WITH SERT</scope>
</reference>
<reference key="9">
    <citation type="journal article" date="2010" name="Cell">
        <title>A tissue-specific atlas of mouse protein phosphorylation and expression.</title>
        <authorList>
            <person name="Huttlin E.L."/>
            <person name="Jedrychowski M.P."/>
            <person name="Elias J.E."/>
            <person name="Goswami T."/>
            <person name="Rad R."/>
            <person name="Beausoleil S.A."/>
            <person name="Villen J."/>
            <person name="Haas W."/>
            <person name="Sowa M.E."/>
            <person name="Gygi S.P."/>
        </authorList>
    </citation>
    <scope>PHOSPHORYLATION [LARGE SCALE ANALYSIS] AT SER-318; SER-320 AND SER-326</scope>
    <scope>IDENTIFICATION BY MASS SPECTROMETRY [LARGE SCALE ANALYSIS]</scope>
    <source>
        <tissue>Brain</tissue>
    </source>
</reference>
<comment type="function">
    <text evidence="4">May be involved in neural development. Involved in regulation of osteoblast function and bone formation. Involved in matrix vesicle release by osteoblasts; this function seems to involve maintenance of the actin cytoskeleton. May be involved in cellular trafficking of SERT and thereby in regulation of serotonin uptake.</text>
</comment>
<comment type="subunit">
    <text evidence="4">Interacts with SERT.</text>
</comment>
<comment type="subcellular location">
    <subcellularLocation>
        <location>Membrane</location>
        <topology>Multi-pass membrane protein</topology>
    </subcellularLocation>
    <subcellularLocation>
        <location>Cell membrane</location>
    </subcellularLocation>
    <text>Colocalizes with SERT at the plasma membrane.</text>
</comment>
<comment type="alternative products">
    <event type="alternative splicing"/>
    <isoform>
        <id>P35803-1</id>
        <name>1</name>
        <name>Alpha-beta-TMD-omega</name>
        <sequence type="displayed"/>
    </isoform>
    <isoform>
        <id>P35803-2</id>
        <name>2</name>
        <name>Alpha-beta-TMD-psi</name>
        <sequence type="described" ref="VSP_007324 VSP_007325"/>
    </isoform>
    <isoform>
        <id>P35803-3</id>
        <name>3</name>
        <name>TMD-omega</name>
        <sequence type="described" ref="VSP_007318"/>
    </isoform>
    <isoform>
        <id>P35803-4</id>
        <name>4</name>
        <name>Alpha-TMD-psi</name>
        <sequence type="described" ref="VSP_007320 VSP_007324 VSP_007325"/>
    </isoform>
    <isoform>
        <id>P35803-5</id>
        <name>5</name>
        <name>TMD-psi</name>
        <sequence type="described" ref="VSP_007318 VSP_007324 VSP_007325"/>
    </isoform>
    <isoform>
        <id>P35803-6</id>
        <name>6</name>
        <name>Alpha-beta-gamma</name>
        <sequence type="described" ref="VSP_007322 VSP_007323"/>
    </isoform>
    <isoform>
        <id>P35803-7</id>
        <name>7</name>
        <name>Alpha-gamma</name>
        <sequence type="described" ref="VSP_007319 VSP_007321"/>
    </isoform>
    <isoform>
        <id>P35803-8</id>
        <name>8</name>
        <name>Alpha-TMD-omega</name>
        <sequence type="described" ref="VSP_007320"/>
    </isoform>
</comment>
<comment type="tissue specificity">
    <text evidence="3">Widely expressed. In the brain, expressed in neurons and oligodendrocytes.</text>
</comment>
<comment type="developmental stage">
    <text>First detected in presumptive postmitotic neurons in the developing neural tube at embryonic day 9.</text>
</comment>
<comment type="similarity">
    <text evidence="9">Belongs to the myelin proteolipid protein family.</text>
</comment>
<accession>P35803</accession>
<accession>A2AEG4</accession>
<accession>Q8R3J6</accession>
<accession>Q99L14</accession>
<accession>Q9D4F5</accession>
<accession>Q9JHG9</accession>
<accession>Q9JHI1</accession>
<accession>Q9JHK2</accession>
<accession>Q9JI62</accession>
<accession>Q9JI63</accession>
<accession>Q9JI64</accession>
<accession>Q9JI65</accession>
<proteinExistence type="evidence at protein level"/>